<feature type="chain" id="PRO_1000201812" description="Ribosome maturation factor RimM">
    <location>
        <begin position="1"/>
        <end position="190"/>
    </location>
</feature>
<feature type="domain" description="PRC barrel" evidence="1">
    <location>
        <begin position="95"/>
        <end position="171"/>
    </location>
</feature>
<feature type="region of interest" description="Disordered" evidence="2">
    <location>
        <begin position="169"/>
        <end position="190"/>
    </location>
</feature>
<name>RIMM_RHOE4</name>
<protein>
    <recommendedName>
        <fullName evidence="1">Ribosome maturation factor RimM</fullName>
    </recommendedName>
</protein>
<comment type="function">
    <text evidence="1">An accessory protein needed during the final step in the assembly of 30S ribosomal subunit, possibly for assembly of the head region. Essential for efficient processing of 16S rRNA. May be needed both before and after RbfA during the maturation of 16S rRNA. It has affinity for free ribosomal 30S subunits but not for 70S ribosomes.</text>
</comment>
<comment type="subunit">
    <text evidence="1">Binds ribosomal protein uS19.</text>
</comment>
<comment type="subcellular location">
    <subcellularLocation>
        <location evidence="1">Cytoplasm</location>
    </subcellularLocation>
</comment>
<comment type="domain">
    <text evidence="1">The PRC barrel domain binds ribosomal protein uS19.</text>
</comment>
<comment type="similarity">
    <text evidence="1">Belongs to the RimM family.</text>
</comment>
<reference key="1">
    <citation type="submission" date="2005-03" db="EMBL/GenBank/DDBJ databases">
        <title>Comparison of the complete genome sequences of Rhodococcus erythropolis PR4 and Rhodococcus opacus B4.</title>
        <authorList>
            <person name="Takarada H."/>
            <person name="Sekine M."/>
            <person name="Hosoyama A."/>
            <person name="Yamada R."/>
            <person name="Fujisawa T."/>
            <person name="Omata S."/>
            <person name="Shimizu A."/>
            <person name="Tsukatani N."/>
            <person name="Tanikawa S."/>
            <person name="Fujita N."/>
            <person name="Harayama S."/>
        </authorList>
    </citation>
    <scope>NUCLEOTIDE SEQUENCE [LARGE SCALE GENOMIC DNA]</scope>
    <source>
        <strain>PR4 / NBRC 100887</strain>
    </source>
</reference>
<evidence type="ECO:0000255" key="1">
    <source>
        <dbReference type="HAMAP-Rule" id="MF_00014"/>
    </source>
</evidence>
<evidence type="ECO:0000256" key="2">
    <source>
        <dbReference type="SAM" id="MobiDB-lite"/>
    </source>
</evidence>
<gene>
    <name evidence="1" type="primary">rimM</name>
    <name type="ordered locus">RER_24460</name>
</gene>
<dbReference type="EMBL" id="AP008957">
    <property type="protein sequence ID" value="BAH33154.1"/>
    <property type="molecule type" value="Genomic_DNA"/>
</dbReference>
<dbReference type="RefSeq" id="WP_020907286.1">
    <property type="nucleotide sequence ID" value="NC_012490.1"/>
</dbReference>
<dbReference type="SMR" id="C0ZXR9"/>
<dbReference type="GeneID" id="57487505"/>
<dbReference type="KEGG" id="rer:RER_24460"/>
<dbReference type="eggNOG" id="COG0806">
    <property type="taxonomic scope" value="Bacteria"/>
</dbReference>
<dbReference type="HOGENOM" id="CLU_077636_0_0_11"/>
<dbReference type="Proteomes" id="UP000002204">
    <property type="component" value="Chromosome"/>
</dbReference>
<dbReference type="GO" id="GO:0005737">
    <property type="term" value="C:cytoplasm"/>
    <property type="evidence" value="ECO:0007669"/>
    <property type="project" value="UniProtKB-SubCell"/>
</dbReference>
<dbReference type="GO" id="GO:0005840">
    <property type="term" value="C:ribosome"/>
    <property type="evidence" value="ECO:0007669"/>
    <property type="project" value="InterPro"/>
</dbReference>
<dbReference type="GO" id="GO:0043022">
    <property type="term" value="F:ribosome binding"/>
    <property type="evidence" value="ECO:0007669"/>
    <property type="project" value="InterPro"/>
</dbReference>
<dbReference type="GO" id="GO:0042274">
    <property type="term" value="P:ribosomal small subunit biogenesis"/>
    <property type="evidence" value="ECO:0007669"/>
    <property type="project" value="UniProtKB-UniRule"/>
</dbReference>
<dbReference type="GO" id="GO:0006364">
    <property type="term" value="P:rRNA processing"/>
    <property type="evidence" value="ECO:0007669"/>
    <property type="project" value="UniProtKB-UniRule"/>
</dbReference>
<dbReference type="Gene3D" id="2.30.30.240">
    <property type="entry name" value="PRC-barrel domain"/>
    <property type="match status" value="1"/>
</dbReference>
<dbReference type="Gene3D" id="2.40.30.60">
    <property type="entry name" value="RimM"/>
    <property type="match status" value="1"/>
</dbReference>
<dbReference type="HAMAP" id="MF_00014">
    <property type="entry name" value="Ribosome_mat_RimM"/>
    <property type="match status" value="1"/>
</dbReference>
<dbReference type="InterPro" id="IPR027275">
    <property type="entry name" value="PRC-brl_dom"/>
</dbReference>
<dbReference type="InterPro" id="IPR011033">
    <property type="entry name" value="PRC_barrel-like_sf"/>
</dbReference>
<dbReference type="InterPro" id="IPR011961">
    <property type="entry name" value="RimM"/>
</dbReference>
<dbReference type="InterPro" id="IPR002676">
    <property type="entry name" value="RimM_N"/>
</dbReference>
<dbReference type="InterPro" id="IPR036976">
    <property type="entry name" value="RimM_N_sf"/>
</dbReference>
<dbReference type="InterPro" id="IPR009000">
    <property type="entry name" value="Transl_B-barrel_sf"/>
</dbReference>
<dbReference type="NCBIfam" id="TIGR02273">
    <property type="entry name" value="16S_RimM"/>
    <property type="match status" value="1"/>
</dbReference>
<dbReference type="PANTHER" id="PTHR33692">
    <property type="entry name" value="RIBOSOME MATURATION FACTOR RIMM"/>
    <property type="match status" value="1"/>
</dbReference>
<dbReference type="PANTHER" id="PTHR33692:SF1">
    <property type="entry name" value="RIBOSOME MATURATION FACTOR RIMM"/>
    <property type="match status" value="1"/>
</dbReference>
<dbReference type="Pfam" id="PF05239">
    <property type="entry name" value="PRC"/>
    <property type="match status" value="1"/>
</dbReference>
<dbReference type="Pfam" id="PF01782">
    <property type="entry name" value="RimM"/>
    <property type="match status" value="1"/>
</dbReference>
<dbReference type="SUPFAM" id="SSF50346">
    <property type="entry name" value="PRC-barrel domain"/>
    <property type="match status" value="1"/>
</dbReference>
<dbReference type="SUPFAM" id="SSF50447">
    <property type="entry name" value="Translation proteins"/>
    <property type="match status" value="1"/>
</dbReference>
<accession>C0ZXR9</accession>
<keyword id="KW-0143">Chaperone</keyword>
<keyword id="KW-0963">Cytoplasm</keyword>
<keyword id="KW-0690">Ribosome biogenesis</keyword>
<keyword id="KW-0698">rRNA processing</keyword>
<organism>
    <name type="scientific">Rhodococcus erythropolis (strain PR4 / NBRC 100887)</name>
    <dbReference type="NCBI Taxonomy" id="234621"/>
    <lineage>
        <taxon>Bacteria</taxon>
        <taxon>Bacillati</taxon>
        <taxon>Actinomycetota</taxon>
        <taxon>Actinomycetes</taxon>
        <taxon>Mycobacteriales</taxon>
        <taxon>Nocardiaceae</taxon>
        <taxon>Rhodococcus</taxon>
        <taxon>Rhodococcus erythropolis group</taxon>
    </lineage>
</organism>
<sequence>MELVVGRVAKSHGIKGELVVEVRTDEPEDRFAVGSVLRGRKPRESTLKSYTVEAARDHSGRLLLRLEGVSDRGDADALRGTLFVIDSSELEPSDDPDEFYDHELEGLKVVLTDGTEVGSVIEVLHSAAGELLSIRRTGETSGELLIPFVAAIVTSVSIADGVVMIEPPEGLLDPDFGDKSNSDNSNSDND</sequence>
<proteinExistence type="inferred from homology"/>